<dbReference type="EC" id="5.2.1.8"/>
<dbReference type="EMBL" id="AACD01000117">
    <property type="protein sequence ID" value="EAA61691.1"/>
    <property type="status" value="ALT_SEQ"/>
    <property type="molecule type" value="Genomic_DNA"/>
</dbReference>
<dbReference type="EMBL" id="BN001304">
    <property type="protein sequence ID" value="CBF79193.1"/>
    <property type="status" value="ALT_SEQ"/>
    <property type="molecule type" value="Genomic_DNA"/>
</dbReference>
<dbReference type="SMR" id="P0CY37"/>
<dbReference type="STRING" id="227321.P0CY37"/>
<dbReference type="HOGENOM" id="CLU_015384_1_0_1"/>
<dbReference type="InParanoid" id="P0CY37"/>
<dbReference type="Proteomes" id="UP000000560">
    <property type="component" value="Chromosome IV"/>
</dbReference>
<dbReference type="GO" id="GO:0005737">
    <property type="term" value="C:cytoplasm"/>
    <property type="evidence" value="ECO:0000318"/>
    <property type="project" value="GO_Central"/>
</dbReference>
<dbReference type="GO" id="GO:0003755">
    <property type="term" value="F:peptidyl-prolyl cis-trans isomerase activity"/>
    <property type="evidence" value="ECO:0000318"/>
    <property type="project" value="GO_Central"/>
</dbReference>
<dbReference type="FunFam" id="3.10.50.40:FF:000050">
    <property type="entry name" value="Peptidylprolyl isomerase"/>
    <property type="match status" value="1"/>
</dbReference>
<dbReference type="Gene3D" id="3.10.50.40">
    <property type="match status" value="1"/>
</dbReference>
<dbReference type="InterPro" id="IPR050689">
    <property type="entry name" value="FKBP-type_PPIase"/>
</dbReference>
<dbReference type="InterPro" id="IPR046357">
    <property type="entry name" value="PPIase_dom_sf"/>
</dbReference>
<dbReference type="InterPro" id="IPR001179">
    <property type="entry name" value="PPIase_FKBP_dom"/>
</dbReference>
<dbReference type="PANTHER" id="PTHR10516:SF447">
    <property type="entry name" value="FK506-BINDING PROTEIN 1B"/>
    <property type="match status" value="1"/>
</dbReference>
<dbReference type="PANTHER" id="PTHR10516">
    <property type="entry name" value="PEPTIDYL-PROLYL CIS-TRANS ISOMERASE"/>
    <property type="match status" value="1"/>
</dbReference>
<dbReference type="Pfam" id="PF00254">
    <property type="entry name" value="FKBP_C"/>
    <property type="match status" value="1"/>
</dbReference>
<dbReference type="SUPFAM" id="SSF54534">
    <property type="entry name" value="FKBP-like"/>
    <property type="match status" value="1"/>
</dbReference>
<dbReference type="PROSITE" id="PS50059">
    <property type="entry name" value="FKBP_PPIASE"/>
    <property type="match status" value="1"/>
</dbReference>
<sequence length="120" mass="12867">MNPPQGVTKTILRPGNGRDSPHTGDTVIIDYTGYLYDDTRGENEYFMGTQFDTSQGRGPLKTEIGVGKVILGWDKGVQQMTLGEKAILTISSDNGYGKRGFPGLIPPDSGLVLYVCSPAG</sequence>
<name>FKB1B_EMENI</name>
<feature type="chain" id="PRO_0000233326" description="FK506-binding protein 1B">
    <location>
        <begin position="1"/>
        <end position="120"/>
    </location>
</feature>
<feature type="domain" description="PPIase FKBP-type" evidence="2">
    <location>
        <begin position="24"/>
        <end position="120"/>
    </location>
</feature>
<feature type="region of interest" description="Disordered" evidence="3">
    <location>
        <begin position="1"/>
        <end position="24"/>
    </location>
</feature>
<keyword id="KW-0413">Isomerase</keyword>
<keyword id="KW-1185">Reference proteome</keyword>
<keyword id="KW-0697">Rotamase</keyword>
<accession>P0CY37</accession>
<accession>C8VB58</accession>
<accession>Q5AXD5</accession>
<evidence type="ECO:0000250" key="1"/>
<evidence type="ECO:0000255" key="2">
    <source>
        <dbReference type="PROSITE-ProRule" id="PRU00277"/>
    </source>
</evidence>
<evidence type="ECO:0000256" key="3">
    <source>
        <dbReference type="SAM" id="MobiDB-lite"/>
    </source>
</evidence>
<evidence type="ECO:0000305" key="4"/>
<organism>
    <name type="scientific">Emericella nidulans (strain FGSC A4 / ATCC 38163 / CBS 112.46 / NRRL 194 / M139)</name>
    <name type="common">Aspergillus nidulans</name>
    <dbReference type="NCBI Taxonomy" id="227321"/>
    <lineage>
        <taxon>Eukaryota</taxon>
        <taxon>Fungi</taxon>
        <taxon>Dikarya</taxon>
        <taxon>Ascomycota</taxon>
        <taxon>Pezizomycotina</taxon>
        <taxon>Eurotiomycetes</taxon>
        <taxon>Eurotiomycetidae</taxon>
        <taxon>Eurotiales</taxon>
        <taxon>Aspergillaceae</taxon>
        <taxon>Aspergillus</taxon>
        <taxon>Aspergillus subgen. Nidulantes</taxon>
    </lineage>
</organism>
<protein>
    <recommendedName>
        <fullName>FK506-binding protein 1B</fullName>
        <shortName>FKBP</shortName>
        <ecNumber>5.2.1.8</ecNumber>
    </recommendedName>
    <alternativeName>
        <fullName>Peptidyl-prolyl cis-trans isomerase</fullName>
        <shortName>PPIase</shortName>
    </alternativeName>
    <alternativeName>
        <fullName>Rapamycin-binding protein</fullName>
    </alternativeName>
</protein>
<proteinExistence type="inferred from homology"/>
<comment type="function">
    <text evidence="1">PPIases accelerate the folding of proteins. It catalyzes the cis-trans isomerization of proline imidic peptide bonds in oligopeptides (By similarity).</text>
</comment>
<comment type="catalytic activity">
    <reaction>
        <text>[protein]-peptidylproline (omega=180) = [protein]-peptidylproline (omega=0)</text>
        <dbReference type="Rhea" id="RHEA:16237"/>
        <dbReference type="Rhea" id="RHEA-COMP:10747"/>
        <dbReference type="Rhea" id="RHEA-COMP:10748"/>
        <dbReference type="ChEBI" id="CHEBI:83833"/>
        <dbReference type="ChEBI" id="CHEBI:83834"/>
        <dbReference type="EC" id="5.2.1.8"/>
    </reaction>
</comment>
<comment type="similarity">
    <text evidence="4">Belongs to the FKBP-type PPIase family. FKBP1 subfamily.</text>
</comment>
<comment type="sequence caution" evidence="4">
    <conflict type="erroneous gene model prediction">
        <sequence resource="EMBL-CDS" id="CBF79193"/>
    </conflict>
    <text>The predicted gene AN7045 has been split into 2 genes: AN12071 and AN12072.</text>
</comment>
<comment type="sequence caution" evidence="4">
    <conflict type="erroneous gene model prediction">
        <sequence resource="EMBL-CDS" id="EAA61691"/>
    </conflict>
    <text>The predicted gene AN7045 has been split into 2 genes: AN12071 and AN12072.</text>
</comment>
<reference key="1">
    <citation type="journal article" date="2005" name="Nature">
        <title>Sequencing of Aspergillus nidulans and comparative analysis with A. fumigatus and A. oryzae.</title>
        <authorList>
            <person name="Galagan J.E."/>
            <person name="Calvo S.E."/>
            <person name="Cuomo C."/>
            <person name="Ma L.-J."/>
            <person name="Wortman J.R."/>
            <person name="Batzoglou S."/>
            <person name="Lee S.-I."/>
            <person name="Bastuerkmen M."/>
            <person name="Spevak C.C."/>
            <person name="Clutterbuck J."/>
            <person name="Kapitonov V."/>
            <person name="Jurka J."/>
            <person name="Scazzocchio C."/>
            <person name="Farman M.L."/>
            <person name="Butler J."/>
            <person name="Purcell S."/>
            <person name="Harris S."/>
            <person name="Braus G.H."/>
            <person name="Draht O."/>
            <person name="Busch S."/>
            <person name="D'Enfert C."/>
            <person name="Bouchier C."/>
            <person name="Goldman G.H."/>
            <person name="Bell-Pedersen D."/>
            <person name="Griffiths-Jones S."/>
            <person name="Doonan J.H."/>
            <person name="Yu J."/>
            <person name="Vienken K."/>
            <person name="Pain A."/>
            <person name="Freitag M."/>
            <person name="Selker E.U."/>
            <person name="Archer D.B."/>
            <person name="Penalva M.A."/>
            <person name="Oakley B.R."/>
            <person name="Momany M."/>
            <person name="Tanaka T."/>
            <person name="Kumagai T."/>
            <person name="Asai K."/>
            <person name="Machida M."/>
            <person name="Nierman W.C."/>
            <person name="Denning D.W."/>
            <person name="Caddick M.X."/>
            <person name="Hynes M."/>
            <person name="Paoletti M."/>
            <person name="Fischer R."/>
            <person name="Miller B.L."/>
            <person name="Dyer P.S."/>
            <person name="Sachs M.S."/>
            <person name="Osmani S.A."/>
            <person name="Birren B.W."/>
        </authorList>
    </citation>
    <scope>NUCLEOTIDE SEQUENCE [LARGE SCALE GENOMIC DNA]</scope>
    <source>
        <strain>FGSC A4 / ATCC 38163 / CBS 112.46 / NRRL 194 / M139</strain>
    </source>
</reference>
<reference key="2">
    <citation type="journal article" date="2009" name="Fungal Genet. Biol.">
        <title>The 2008 update of the Aspergillus nidulans genome annotation: a community effort.</title>
        <authorList>
            <person name="Wortman J.R."/>
            <person name="Gilsenan J.M."/>
            <person name="Joardar V."/>
            <person name="Deegan J."/>
            <person name="Clutterbuck J."/>
            <person name="Andersen M.R."/>
            <person name="Archer D."/>
            <person name="Bencina M."/>
            <person name="Braus G."/>
            <person name="Coutinho P."/>
            <person name="von Dohren H."/>
            <person name="Doonan J."/>
            <person name="Driessen A.J."/>
            <person name="Durek P."/>
            <person name="Espeso E."/>
            <person name="Fekete E."/>
            <person name="Flipphi M."/>
            <person name="Estrada C.G."/>
            <person name="Geysens S."/>
            <person name="Goldman G."/>
            <person name="de Groot P.W."/>
            <person name="Hansen K."/>
            <person name="Harris S.D."/>
            <person name="Heinekamp T."/>
            <person name="Helmstaedt K."/>
            <person name="Henrissat B."/>
            <person name="Hofmann G."/>
            <person name="Homan T."/>
            <person name="Horio T."/>
            <person name="Horiuchi H."/>
            <person name="James S."/>
            <person name="Jones M."/>
            <person name="Karaffa L."/>
            <person name="Karanyi Z."/>
            <person name="Kato M."/>
            <person name="Keller N."/>
            <person name="Kelly D.E."/>
            <person name="Kiel J.A."/>
            <person name="Kim J.M."/>
            <person name="van der Klei I.J."/>
            <person name="Klis F.M."/>
            <person name="Kovalchuk A."/>
            <person name="Krasevec N."/>
            <person name="Kubicek C.P."/>
            <person name="Liu B."/>
            <person name="Maccabe A."/>
            <person name="Meyer V."/>
            <person name="Mirabito P."/>
            <person name="Miskei M."/>
            <person name="Mos M."/>
            <person name="Mullins J."/>
            <person name="Nelson D.R."/>
            <person name="Nielsen J."/>
            <person name="Oakley B.R."/>
            <person name="Osmani S.A."/>
            <person name="Pakula T."/>
            <person name="Paszewski A."/>
            <person name="Paulsen I."/>
            <person name="Pilsyk S."/>
            <person name="Pocsi I."/>
            <person name="Punt P.J."/>
            <person name="Ram A.F."/>
            <person name="Ren Q."/>
            <person name="Robellet X."/>
            <person name="Robson G."/>
            <person name="Seiboth B."/>
            <person name="van Solingen P."/>
            <person name="Specht T."/>
            <person name="Sun J."/>
            <person name="Taheri-Talesh N."/>
            <person name="Takeshita N."/>
            <person name="Ussery D."/>
            <person name="vanKuyk P.A."/>
            <person name="Visser H."/>
            <person name="van de Vondervoort P.J."/>
            <person name="de Vries R.P."/>
            <person name="Walton J."/>
            <person name="Xiang X."/>
            <person name="Xiong Y."/>
            <person name="Zeng A.P."/>
            <person name="Brandt B.W."/>
            <person name="Cornell M.J."/>
            <person name="van den Hondel C.A."/>
            <person name="Visser J."/>
            <person name="Oliver S.G."/>
            <person name="Turner G."/>
        </authorList>
    </citation>
    <scope>GENOME REANNOTATION</scope>
    <source>
        <strain>FGSC A4 / ATCC 38163 / CBS 112.46 / NRRL 194 / M139</strain>
    </source>
</reference>
<reference key="3">
    <citation type="journal article" date="2006" name="BMC Genomics">
        <title>Identification and comparative analysis of sixteen fungal peptidyl-prolyl cis/trans isomerase repertoires.</title>
        <authorList>
            <person name="Pemberton T.J."/>
        </authorList>
    </citation>
    <scope>GENE NAME</scope>
    <scope>REVISION OF GENE MODEL</scope>
</reference>
<gene>
    <name type="primary">FKBP3</name>
    <name type="synonym">fpr1B</name>
    <name type="ORF">AN12071</name>
</gene>